<reference key="1">
    <citation type="journal article" date="2004" name="Proc. Natl. Acad. Sci. U.S.A.">
        <title>Complete genomes of two clinical Staphylococcus aureus strains: evidence for the rapid evolution of virulence and drug resistance.</title>
        <authorList>
            <person name="Holden M.T.G."/>
            <person name="Feil E.J."/>
            <person name="Lindsay J.A."/>
            <person name="Peacock S.J."/>
            <person name="Day N.P.J."/>
            <person name="Enright M.C."/>
            <person name="Foster T.J."/>
            <person name="Moore C.E."/>
            <person name="Hurst L."/>
            <person name="Atkin R."/>
            <person name="Barron A."/>
            <person name="Bason N."/>
            <person name="Bentley S.D."/>
            <person name="Chillingworth C."/>
            <person name="Chillingworth T."/>
            <person name="Churcher C."/>
            <person name="Clark L."/>
            <person name="Corton C."/>
            <person name="Cronin A."/>
            <person name="Doggett J."/>
            <person name="Dowd L."/>
            <person name="Feltwell T."/>
            <person name="Hance Z."/>
            <person name="Harris B."/>
            <person name="Hauser H."/>
            <person name="Holroyd S."/>
            <person name="Jagels K."/>
            <person name="James K.D."/>
            <person name="Lennard N."/>
            <person name="Line A."/>
            <person name="Mayes R."/>
            <person name="Moule S."/>
            <person name="Mungall K."/>
            <person name="Ormond D."/>
            <person name="Quail M.A."/>
            <person name="Rabbinowitsch E."/>
            <person name="Rutherford K.M."/>
            <person name="Sanders M."/>
            <person name="Sharp S."/>
            <person name="Simmonds M."/>
            <person name="Stevens K."/>
            <person name="Whitehead S."/>
            <person name="Barrell B.G."/>
            <person name="Spratt B.G."/>
            <person name="Parkhill J."/>
        </authorList>
    </citation>
    <scope>NUCLEOTIDE SEQUENCE [LARGE SCALE GENOMIC DNA]</scope>
    <source>
        <strain>MSSA476</strain>
    </source>
</reference>
<keyword id="KW-1003">Cell membrane</keyword>
<keyword id="KW-0444">Lipid biosynthesis</keyword>
<keyword id="KW-0443">Lipid metabolism</keyword>
<keyword id="KW-0472">Membrane</keyword>
<keyword id="KW-0594">Phospholipid biosynthesis</keyword>
<keyword id="KW-1208">Phospholipid metabolism</keyword>
<keyword id="KW-0808">Transferase</keyword>
<keyword id="KW-0812">Transmembrane</keyword>
<keyword id="KW-1133">Transmembrane helix</keyword>
<organism>
    <name type="scientific">Staphylococcus aureus (strain MSSA476)</name>
    <dbReference type="NCBI Taxonomy" id="282459"/>
    <lineage>
        <taxon>Bacteria</taxon>
        <taxon>Bacillati</taxon>
        <taxon>Bacillota</taxon>
        <taxon>Bacilli</taxon>
        <taxon>Bacillales</taxon>
        <taxon>Staphylococcaceae</taxon>
        <taxon>Staphylococcus</taxon>
    </lineage>
</organism>
<dbReference type="EC" id="2.7.8.5"/>
<dbReference type="EMBL" id="BX571857">
    <property type="protein sequence ID" value="CAG42994.1"/>
    <property type="molecule type" value="Genomic_DNA"/>
</dbReference>
<dbReference type="RefSeq" id="WP_001025093.1">
    <property type="nucleotide sequence ID" value="NC_002953.3"/>
</dbReference>
<dbReference type="SMR" id="Q6G9T0"/>
<dbReference type="KEGG" id="sas:SAS1217"/>
<dbReference type="HOGENOM" id="CLU_051314_2_3_9"/>
<dbReference type="UniPathway" id="UPA00084">
    <property type="reaction ID" value="UER00503"/>
</dbReference>
<dbReference type="GO" id="GO:0005886">
    <property type="term" value="C:plasma membrane"/>
    <property type="evidence" value="ECO:0007669"/>
    <property type="project" value="UniProtKB-SubCell"/>
</dbReference>
<dbReference type="GO" id="GO:0008444">
    <property type="term" value="F:CDP-diacylglycerol-glycerol-3-phosphate 3-phosphatidyltransferase activity"/>
    <property type="evidence" value="ECO:0007669"/>
    <property type="project" value="UniProtKB-EC"/>
</dbReference>
<dbReference type="GO" id="GO:0006655">
    <property type="term" value="P:phosphatidylglycerol biosynthetic process"/>
    <property type="evidence" value="ECO:0007669"/>
    <property type="project" value="UniProtKB-UniPathway"/>
</dbReference>
<dbReference type="FunFam" id="1.20.120.1760:FF:000004">
    <property type="entry name" value="CDP-diacylglycerol--glycerol-3-phosphate 3-phosphatidyltransferase"/>
    <property type="match status" value="1"/>
</dbReference>
<dbReference type="Gene3D" id="1.20.120.1760">
    <property type="match status" value="1"/>
</dbReference>
<dbReference type="InterPro" id="IPR050324">
    <property type="entry name" value="CDP-alcohol_PTase-I"/>
</dbReference>
<dbReference type="InterPro" id="IPR000462">
    <property type="entry name" value="CDP-OH_P_trans"/>
</dbReference>
<dbReference type="InterPro" id="IPR043130">
    <property type="entry name" value="CDP-OH_PTrfase_TM_dom"/>
</dbReference>
<dbReference type="InterPro" id="IPR048254">
    <property type="entry name" value="CDP_ALCOHOL_P_TRANSF_CS"/>
</dbReference>
<dbReference type="InterPro" id="IPR004570">
    <property type="entry name" value="Phosphatidylglycerol_P_synth"/>
</dbReference>
<dbReference type="NCBIfam" id="TIGR00560">
    <property type="entry name" value="pgsA"/>
    <property type="match status" value="1"/>
</dbReference>
<dbReference type="PANTHER" id="PTHR14269:SF62">
    <property type="entry name" value="CDP-DIACYLGLYCEROL--GLYCEROL-3-PHOSPHATE 3-PHOSPHATIDYLTRANSFERASE 1, CHLOROPLASTIC"/>
    <property type="match status" value="1"/>
</dbReference>
<dbReference type="PANTHER" id="PTHR14269">
    <property type="entry name" value="CDP-DIACYLGLYCEROL--GLYCEROL-3-PHOSPHATE 3-PHOSPHATIDYLTRANSFERASE-RELATED"/>
    <property type="match status" value="1"/>
</dbReference>
<dbReference type="Pfam" id="PF01066">
    <property type="entry name" value="CDP-OH_P_transf"/>
    <property type="match status" value="1"/>
</dbReference>
<dbReference type="PIRSF" id="PIRSF000847">
    <property type="entry name" value="Phos_ph_gly_syn"/>
    <property type="match status" value="1"/>
</dbReference>
<dbReference type="PROSITE" id="PS00379">
    <property type="entry name" value="CDP_ALCOHOL_P_TRANSF"/>
    <property type="match status" value="1"/>
</dbReference>
<accession>Q6G9T0</accession>
<comment type="function">
    <text evidence="1">This protein catalyzes the committed step to the synthesis of the acidic phospholipids.</text>
</comment>
<comment type="catalytic activity">
    <reaction>
        <text>a CDP-1,2-diacyl-sn-glycerol + sn-glycerol 3-phosphate = a 1,2-diacyl-sn-glycero-3-phospho-(1'-sn-glycero-3'-phosphate) + CMP + H(+)</text>
        <dbReference type="Rhea" id="RHEA:12593"/>
        <dbReference type="ChEBI" id="CHEBI:15378"/>
        <dbReference type="ChEBI" id="CHEBI:57597"/>
        <dbReference type="ChEBI" id="CHEBI:58332"/>
        <dbReference type="ChEBI" id="CHEBI:60110"/>
        <dbReference type="ChEBI" id="CHEBI:60377"/>
        <dbReference type="EC" id="2.7.8.5"/>
    </reaction>
</comment>
<comment type="pathway">
    <text>Phospholipid metabolism; phosphatidylglycerol biosynthesis; phosphatidylglycerol from CDP-diacylglycerol: step 1/2.</text>
</comment>
<comment type="subcellular location">
    <subcellularLocation>
        <location evidence="1">Cell membrane</location>
        <topology evidence="1">Multi-pass membrane protein</topology>
    </subcellularLocation>
</comment>
<comment type="similarity">
    <text evidence="3">Belongs to the CDP-alcohol phosphatidyltransferase class-I family.</text>
</comment>
<proteinExistence type="inferred from homology"/>
<sequence length="192" mass="21014">MNIPNQITVFRVVLIPVFILFALVDFGFGNVSFLGGYEIRIELLISGFIFILASLSDFVDGYLARKWNLVTNMGKFLDPLADKLLVASALIVLVQLGLTNSVVAIIIIAREFAVTGLRLLQIEQGFVSAAGQLGKIKTAVTMVAITWLLLGDPLATLIGLSLGQILLYIGVIFTILSGIEYFYKGRDVFKQK</sequence>
<evidence type="ECO:0000250" key="1"/>
<evidence type="ECO:0000255" key="2"/>
<evidence type="ECO:0000305" key="3"/>
<protein>
    <recommendedName>
        <fullName>CDP-diacylglycerol--glycerol-3-phosphate 3-phosphatidyltransferase</fullName>
        <ecNumber>2.7.8.5</ecNumber>
    </recommendedName>
    <alternativeName>
        <fullName>Phosphatidylglycerophosphate synthase</fullName>
        <shortName>PGP synthase</shortName>
    </alternativeName>
</protein>
<gene>
    <name type="primary">pgsA</name>
    <name type="ordered locus">SAS1217</name>
</gene>
<name>PGSA_STAAS</name>
<feature type="chain" id="PRO_0000056788" description="CDP-diacylglycerol--glycerol-3-phosphate 3-phosphatidyltransferase">
    <location>
        <begin position="1"/>
        <end position="192"/>
    </location>
</feature>
<feature type="transmembrane region" description="Helical" evidence="2">
    <location>
        <begin position="7"/>
        <end position="29"/>
    </location>
</feature>
<feature type="transmembrane region" description="Helical" evidence="2">
    <location>
        <begin position="44"/>
        <end position="63"/>
    </location>
</feature>
<feature type="transmembrane region" description="Helical" evidence="2">
    <location>
        <begin position="84"/>
        <end position="106"/>
    </location>
</feature>
<feature type="transmembrane region" description="Helical" evidence="2">
    <location>
        <begin position="129"/>
        <end position="151"/>
    </location>
</feature>
<feature type="transmembrane region" description="Helical" evidence="2">
    <location>
        <begin position="157"/>
        <end position="179"/>
    </location>
</feature>